<gene>
    <name type="primary">vma21</name>
</gene>
<feature type="chain" id="PRO_0000331503" description="Vacuolar ATPase assembly integral membrane protein vma21">
    <location>
        <begin position="1"/>
        <end position="104"/>
    </location>
</feature>
<feature type="topological domain" description="Cytoplasmic" evidence="1">
    <location>
        <begin position="1"/>
        <end position="28"/>
    </location>
</feature>
<feature type="transmembrane region" description="Helical" evidence="1">
    <location>
        <begin position="29"/>
        <end position="49"/>
    </location>
</feature>
<feature type="topological domain" description="Lumenal" evidence="1">
    <location>
        <begin position="50"/>
        <end position="68"/>
    </location>
</feature>
<feature type="transmembrane region" description="Helical" evidence="1">
    <location>
        <begin position="69"/>
        <end position="89"/>
    </location>
</feature>
<feature type="topological domain" description="Cytoplasmic" evidence="1">
    <location>
        <begin position="90"/>
        <end position="104"/>
    </location>
</feature>
<comment type="function">
    <text evidence="1">Required for the assembly of the V0 complex of the vacuolar ATPase (V-ATPase) in the endoplasmic reticulum.</text>
</comment>
<comment type="subcellular location">
    <subcellularLocation>
        <location evidence="1">Endoplasmic reticulum membrane</location>
        <topology evidence="1">Multi-pass membrane protein</topology>
    </subcellularLocation>
    <subcellularLocation>
        <location evidence="1">Endoplasmic reticulum-Golgi intermediate compartment membrane</location>
        <topology evidence="1">Multi-pass membrane protein</topology>
    </subcellularLocation>
    <subcellularLocation>
        <location evidence="1">Cytoplasmic vesicle</location>
        <location evidence="1">COPII-coated vesicle membrane</location>
        <topology evidence="1">Multi-pass membrane protein</topology>
    </subcellularLocation>
</comment>
<comment type="similarity">
    <text evidence="1">Belongs to the VMA21 family.</text>
</comment>
<accession>Q4V7U1</accession>
<dbReference type="EMBL" id="BC097716">
    <property type="protein sequence ID" value="AAH97716.1"/>
    <property type="molecule type" value="mRNA"/>
</dbReference>
<dbReference type="RefSeq" id="NP_001089490.1">
    <property type="nucleotide sequence ID" value="NM_001096021.1"/>
</dbReference>
<dbReference type="SMR" id="Q4V7U1"/>
<dbReference type="DNASU" id="734541"/>
<dbReference type="GeneID" id="734541"/>
<dbReference type="KEGG" id="xla:734541"/>
<dbReference type="AGR" id="Xenbase:XB-GENE-6255895"/>
<dbReference type="CTD" id="734541"/>
<dbReference type="Xenbase" id="XB-GENE-6255895">
    <property type="gene designation" value="vma21.L"/>
</dbReference>
<dbReference type="OMA" id="PYFRGNE"/>
<dbReference type="OrthoDB" id="160405at2759"/>
<dbReference type="Proteomes" id="UP000186698">
    <property type="component" value="Chromosome 8L"/>
</dbReference>
<dbReference type="Bgee" id="734541">
    <property type="expression patterns" value="Expressed in brain and 19 other cell types or tissues"/>
</dbReference>
<dbReference type="GO" id="GO:0005789">
    <property type="term" value="C:endoplasmic reticulum membrane"/>
    <property type="evidence" value="ECO:0000318"/>
    <property type="project" value="GO_Central"/>
</dbReference>
<dbReference type="GO" id="GO:0033116">
    <property type="term" value="C:endoplasmic reticulum-Golgi intermediate compartment membrane"/>
    <property type="evidence" value="ECO:0007669"/>
    <property type="project" value="UniProtKB-SubCell"/>
</dbReference>
<dbReference type="GO" id="GO:0012507">
    <property type="term" value="C:ER to Golgi transport vesicle membrane"/>
    <property type="evidence" value="ECO:0007669"/>
    <property type="project" value="UniProtKB-SubCell"/>
</dbReference>
<dbReference type="GO" id="GO:0070072">
    <property type="term" value="P:vacuolar proton-transporting V-type ATPase complex assembly"/>
    <property type="evidence" value="ECO:0000318"/>
    <property type="project" value="GO_Central"/>
</dbReference>
<dbReference type="HAMAP" id="MF_03058">
    <property type="entry name" value="VMA21"/>
    <property type="match status" value="1"/>
</dbReference>
<dbReference type="InterPro" id="IPR019013">
    <property type="entry name" value="Vma21"/>
</dbReference>
<dbReference type="PANTHER" id="PTHR31792">
    <property type="entry name" value="VACUOLAR ATPASE ASSEMBLY INTEGRAL MEMBRANE PROTEIN VMA21"/>
    <property type="match status" value="1"/>
</dbReference>
<dbReference type="PANTHER" id="PTHR31792:SF3">
    <property type="entry name" value="VACUOLAR ATPASE ASSEMBLY INTEGRAL MEMBRANE PROTEIN VMA21"/>
    <property type="match status" value="1"/>
</dbReference>
<dbReference type="Pfam" id="PF09446">
    <property type="entry name" value="VMA21"/>
    <property type="match status" value="1"/>
</dbReference>
<reference key="1">
    <citation type="submission" date="2005-06" db="EMBL/GenBank/DDBJ databases">
        <authorList>
            <consortium name="NIH - Xenopus Gene Collection (XGC) project"/>
        </authorList>
    </citation>
    <scope>NUCLEOTIDE SEQUENCE [LARGE SCALE MRNA]</scope>
    <source>
        <tissue>Egg</tissue>
    </source>
</reference>
<name>VMA21_XENLA</name>
<keyword id="KW-0968">Cytoplasmic vesicle</keyword>
<keyword id="KW-0256">Endoplasmic reticulum</keyword>
<keyword id="KW-0472">Membrane</keyword>
<keyword id="KW-1185">Reference proteome</keyword>
<keyword id="KW-0812">Transmembrane</keyword>
<keyword id="KW-1133">Transmembrane helix</keyword>
<sequence>MERYDKAALNAADVPPPSFSQNGGSLVSTLKTLLFFTILMIMLPIGLYFSSKVYVFEGTYGMSNRDSYFYAAIVAVVAVHVVLAMFVYVAWNEGSPQWREGKQD</sequence>
<proteinExistence type="inferred from homology"/>
<protein>
    <recommendedName>
        <fullName evidence="1">Vacuolar ATPase assembly integral membrane protein vma21</fullName>
    </recommendedName>
</protein>
<organism>
    <name type="scientific">Xenopus laevis</name>
    <name type="common">African clawed frog</name>
    <dbReference type="NCBI Taxonomy" id="8355"/>
    <lineage>
        <taxon>Eukaryota</taxon>
        <taxon>Metazoa</taxon>
        <taxon>Chordata</taxon>
        <taxon>Craniata</taxon>
        <taxon>Vertebrata</taxon>
        <taxon>Euteleostomi</taxon>
        <taxon>Amphibia</taxon>
        <taxon>Batrachia</taxon>
        <taxon>Anura</taxon>
        <taxon>Pipoidea</taxon>
        <taxon>Pipidae</taxon>
        <taxon>Xenopodinae</taxon>
        <taxon>Xenopus</taxon>
        <taxon>Xenopus</taxon>
    </lineage>
</organism>
<evidence type="ECO:0000255" key="1">
    <source>
        <dbReference type="HAMAP-Rule" id="MF_03058"/>
    </source>
</evidence>